<name>BAMC_PHOAA</name>
<sequence>MAILLQKSKVMKIAGMSLAMLLAACSSDQSYKRQVNGDYAYLEAPPLKALNVPAGMILPLQNGEYDIPPTISKGLIGKELDIRPPSQALALLSGSRTENSIKSSKLLLENTPENSNLWSQINNVLLKKGDKISQRDDANQTLVTDWIEWQRTDEDVPYQTRHRISIAHQNYQIELSVANEGLRQGGQQVTDPVEIQRYNALMLNELIEGVNRQRERMSDNPAAHNLGPLDVQSGGDTSGLPQMIVRAPYNIVWDRLPAALEKVGMKVGNRSRSTGSITVAYKSLSTSEWKSMGVNEPSISEGDYKLQIGDLNNRSSLQFISDKGKPLTQVQNDELVAVLKAAFSQTAGL</sequence>
<comment type="function">
    <text evidence="1">Part of the outer membrane protein assembly complex, which is involved in assembly and insertion of beta-barrel proteins into the outer membrane.</text>
</comment>
<comment type="subunit">
    <text evidence="1">Part of the Bam complex, which is composed of the outer membrane protein BamA, and four lipoproteins BamB, BamC, BamD and BamE.</text>
</comment>
<comment type="subcellular location">
    <subcellularLocation>
        <location evidence="1">Cell outer membrane</location>
        <topology evidence="1">Lipid-anchor</topology>
    </subcellularLocation>
</comment>
<comment type="similarity">
    <text evidence="1">Belongs to the BamC family.</text>
</comment>
<dbReference type="EMBL" id="FM162591">
    <property type="protein sequence ID" value="CAQ83889.1"/>
    <property type="molecule type" value="Genomic_DNA"/>
</dbReference>
<dbReference type="SMR" id="C7BGW7"/>
<dbReference type="STRING" id="291112.PAU_01797"/>
<dbReference type="KEGG" id="pay:PAU_01797"/>
<dbReference type="eggNOG" id="COG3317">
    <property type="taxonomic scope" value="Bacteria"/>
</dbReference>
<dbReference type="Proteomes" id="UP000002747">
    <property type="component" value="Chromosome"/>
</dbReference>
<dbReference type="GO" id="GO:0009279">
    <property type="term" value="C:cell outer membrane"/>
    <property type="evidence" value="ECO:0007669"/>
    <property type="project" value="UniProtKB-SubCell"/>
</dbReference>
<dbReference type="GO" id="GO:0043165">
    <property type="term" value="P:Gram-negative-bacterium-type cell outer membrane assembly"/>
    <property type="evidence" value="ECO:0007669"/>
    <property type="project" value="UniProtKB-UniRule"/>
</dbReference>
<dbReference type="GO" id="GO:0051205">
    <property type="term" value="P:protein insertion into membrane"/>
    <property type="evidence" value="ECO:0007669"/>
    <property type="project" value="UniProtKB-UniRule"/>
</dbReference>
<dbReference type="Gene3D" id="3.30.530.50">
    <property type="match status" value="1"/>
</dbReference>
<dbReference type="Gene3D" id="3.30.310.170">
    <property type="entry name" value="Outer membrane protein assembly factor BamC"/>
    <property type="match status" value="1"/>
</dbReference>
<dbReference type="HAMAP" id="MF_00924">
    <property type="entry name" value="OM_assembly_BamC"/>
    <property type="match status" value="1"/>
</dbReference>
<dbReference type="InterPro" id="IPR014524">
    <property type="entry name" value="BamC"/>
</dbReference>
<dbReference type="InterPro" id="IPR042268">
    <property type="entry name" value="BamC_C"/>
</dbReference>
<dbReference type="InterPro" id="IPR010653">
    <property type="entry name" value="NlpB/DapX"/>
</dbReference>
<dbReference type="NCBIfam" id="NF008674">
    <property type="entry name" value="PRK11679.1"/>
    <property type="match status" value="1"/>
</dbReference>
<dbReference type="Pfam" id="PF06804">
    <property type="entry name" value="Lipoprotein_18"/>
    <property type="match status" value="1"/>
</dbReference>
<dbReference type="PIRSF" id="PIRSF026343">
    <property type="entry name" value="NlpB"/>
    <property type="match status" value="1"/>
</dbReference>
<dbReference type="PROSITE" id="PS51257">
    <property type="entry name" value="PROKAR_LIPOPROTEIN"/>
    <property type="match status" value="1"/>
</dbReference>
<organism>
    <name type="scientific">Photorhabdus asymbiotica subsp. asymbiotica (strain ATCC 43949 / 3105-77)</name>
    <name type="common">Xenorhabdus luminescens (strain 2)</name>
    <dbReference type="NCBI Taxonomy" id="553480"/>
    <lineage>
        <taxon>Bacteria</taxon>
        <taxon>Pseudomonadati</taxon>
        <taxon>Pseudomonadota</taxon>
        <taxon>Gammaproteobacteria</taxon>
        <taxon>Enterobacterales</taxon>
        <taxon>Morganellaceae</taxon>
        <taxon>Photorhabdus</taxon>
    </lineage>
</organism>
<gene>
    <name evidence="1" type="primary">bamC</name>
    <name type="synonym">nlpB</name>
    <name type="ordered locus">PAU_01797</name>
</gene>
<reference key="1">
    <citation type="journal article" date="2009" name="BMC Genomics">
        <title>Comparative genomics of the emerging human pathogen Photorhabdus asymbiotica with the insect pathogen Photorhabdus luminescens.</title>
        <authorList>
            <person name="Wilkinson P."/>
            <person name="Waterfield N.R."/>
            <person name="Crossman L."/>
            <person name="Corton C."/>
            <person name="Sanchez-Contreras M."/>
            <person name="Vlisidou I."/>
            <person name="Barron A."/>
            <person name="Bignell A."/>
            <person name="Clark L."/>
            <person name="Ormond D."/>
            <person name="Mayho M."/>
            <person name="Bason N."/>
            <person name="Smith F."/>
            <person name="Simmonds M."/>
            <person name="Churcher C."/>
            <person name="Harris D."/>
            <person name="Thompson N.R."/>
            <person name="Quail M."/>
            <person name="Parkhill J."/>
            <person name="ffrench-Constant R.H."/>
        </authorList>
    </citation>
    <scope>NUCLEOTIDE SEQUENCE [LARGE SCALE GENOMIC DNA]</scope>
    <source>
        <strain>ATCC 43949 / 3105-77</strain>
    </source>
</reference>
<evidence type="ECO:0000255" key="1">
    <source>
        <dbReference type="HAMAP-Rule" id="MF_00924"/>
    </source>
</evidence>
<proteinExistence type="inferred from homology"/>
<keyword id="KW-0998">Cell outer membrane</keyword>
<keyword id="KW-0449">Lipoprotein</keyword>
<keyword id="KW-0472">Membrane</keyword>
<keyword id="KW-0564">Palmitate</keyword>
<keyword id="KW-0732">Signal</keyword>
<protein>
    <recommendedName>
        <fullName evidence="1">Outer membrane protein assembly factor BamC</fullName>
    </recommendedName>
</protein>
<feature type="signal peptide" evidence="1">
    <location>
        <begin position="1"/>
        <end position="24"/>
    </location>
</feature>
<feature type="chain" id="PRO_5000501460" description="Outer membrane protein assembly factor BamC">
    <location>
        <begin position="25"/>
        <end position="349"/>
    </location>
</feature>
<feature type="lipid moiety-binding region" description="N-palmitoyl cysteine" evidence="1">
    <location>
        <position position="25"/>
    </location>
</feature>
<feature type="lipid moiety-binding region" description="S-diacylglycerol cysteine" evidence="1">
    <location>
        <position position="25"/>
    </location>
</feature>
<accession>C7BGW7</accession>